<gene>
    <name evidence="1" type="primary">rsmG</name>
    <name type="ordered locus">CT2160</name>
</gene>
<sequence length="217" mass="23898">MQNDLHLLEGLCRQHGIPVTKNALTLLVRYARLLEAWNLKVNLVSRKEHAPVIVKHVFHSLLIARIHDFKPGETVLDLGTGGGLPGIPLAILFPETSFLLVDSTGKKIAACKAMIKELGLENVIALHSRVEELKGVIFDTVLSRQVAPLEELCAYSARLLKHDGVLICLKGGSLNEEIAEAVLSREKHLGFPASVDQLPIGEIDPMFSEKQIVIARW</sequence>
<name>RSMG_CHLTE</name>
<evidence type="ECO:0000255" key="1">
    <source>
        <dbReference type="HAMAP-Rule" id="MF_00074"/>
    </source>
</evidence>
<proteinExistence type="inferred from homology"/>
<protein>
    <recommendedName>
        <fullName evidence="1">Ribosomal RNA small subunit methyltransferase G</fullName>
        <ecNumber evidence="1">2.1.1.-</ecNumber>
    </recommendedName>
    <alternativeName>
        <fullName evidence="1">16S rRNA 7-methylguanosine methyltransferase</fullName>
        <shortName evidence="1">16S rRNA m7G methyltransferase</shortName>
    </alternativeName>
</protein>
<keyword id="KW-0963">Cytoplasm</keyword>
<keyword id="KW-0489">Methyltransferase</keyword>
<keyword id="KW-1185">Reference proteome</keyword>
<keyword id="KW-0698">rRNA processing</keyword>
<keyword id="KW-0949">S-adenosyl-L-methionine</keyword>
<keyword id="KW-0808">Transferase</keyword>
<organism>
    <name type="scientific">Chlorobaculum tepidum (strain ATCC 49652 / DSM 12025 / NBRC 103806 / TLS)</name>
    <name type="common">Chlorobium tepidum</name>
    <dbReference type="NCBI Taxonomy" id="194439"/>
    <lineage>
        <taxon>Bacteria</taxon>
        <taxon>Pseudomonadati</taxon>
        <taxon>Chlorobiota</taxon>
        <taxon>Chlorobiia</taxon>
        <taxon>Chlorobiales</taxon>
        <taxon>Chlorobiaceae</taxon>
        <taxon>Chlorobaculum</taxon>
    </lineage>
</organism>
<dbReference type="EC" id="2.1.1.-" evidence="1"/>
<dbReference type="EMBL" id="AE006470">
    <property type="protein sequence ID" value="AAM73376.1"/>
    <property type="molecule type" value="Genomic_DNA"/>
</dbReference>
<dbReference type="RefSeq" id="NP_663034.1">
    <property type="nucleotide sequence ID" value="NC_002932.3"/>
</dbReference>
<dbReference type="RefSeq" id="WP_010933813.1">
    <property type="nucleotide sequence ID" value="NC_002932.3"/>
</dbReference>
<dbReference type="SMR" id="Q8KAK0"/>
<dbReference type="STRING" id="194439.CT2160"/>
<dbReference type="EnsemblBacteria" id="AAM73376">
    <property type="protein sequence ID" value="AAM73376"/>
    <property type="gene ID" value="CT2160"/>
</dbReference>
<dbReference type="KEGG" id="cte:CT2160"/>
<dbReference type="PATRIC" id="fig|194439.7.peg.1959"/>
<dbReference type="eggNOG" id="COG0357">
    <property type="taxonomic scope" value="Bacteria"/>
</dbReference>
<dbReference type="HOGENOM" id="CLU_065341_2_2_10"/>
<dbReference type="OrthoDB" id="9808773at2"/>
<dbReference type="Proteomes" id="UP000001007">
    <property type="component" value="Chromosome"/>
</dbReference>
<dbReference type="GO" id="GO:0005829">
    <property type="term" value="C:cytosol"/>
    <property type="evidence" value="ECO:0007669"/>
    <property type="project" value="TreeGrafter"/>
</dbReference>
<dbReference type="GO" id="GO:0070043">
    <property type="term" value="F:rRNA (guanine-N7-)-methyltransferase activity"/>
    <property type="evidence" value="ECO:0007669"/>
    <property type="project" value="UniProtKB-UniRule"/>
</dbReference>
<dbReference type="CDD" id="cd02440">
    <property type="entry name" value="AdoMet_MTases"/>
    <property type="match status" value="1"/>
</dbReference>
<dbReference type="Gene3D" id="3.40.50.150">
    <property type="entry name" value="Vaccinia Virus protein VP39"/>
    <property type="match status" value="1"/>
</dbReference>
<dbReference type="HAMAP" id="MF_00074">
    <property type="entry name" value="16SrRNA_methyltr_G"/>
    <property type="match status" value="1"/>
</dbReference>
<dbReference type="InterPro" id="IPR003682">
    <property type="entry name" value="rRNA_ssu_MeTfrase_G"/>
</dbReference>
<dbReference type="InterPro" id="IPR029063">
    <property type="entry name" value="SAM-dependent_MTases_sf"/>
</dbReference>
<dbReference type="NCBIfam" id="TIGR00138">
    <property type="entry name" value="rsmG_gidB"/>
    <property type="match status" value="1"/>
</dbReference>
<dbReference type="PANTHER" id="PTHR31760">
    <property type="entry name" value="S-ADENOSYL-L-METHIONINE-DEPENDENT METHYLTRANSFERASES SUPERFAMILY PROTEIN"/>
    <property type="match status" value="1"/>
</dbReference>
<dbReference type="PANTHER" id="PTHR31760:SF0">
    <property type="entry name" value="S-ADENOSYL-L-METHIONINE-DEPENDENT METHYLTRANSFERASES SUPERFAMILY PROTEIN"/>
    <property type="match status" value="1"/>
</dbReference>
<dbReference type="Pfam" id="PF02527">
    <property type="entry name" value="GidB"/>
    <property type="match status" value="1"/>
</dbReference>
<dbReference type="PIRSF" id="PIRSF003078">
    <property type="entry name" value="GidB"/>
    <property type="match status" value="1"/>
</dbReference>
<dbReference type="SUPFAM" id="SSF53335">
    <property type="entry name" value="S-adenosyl-L-methionine-dependent methyltransferases"/>
    <property type="match status" value="1"/>
</dbReference>
<comment type="function">
    <text evidence="1">Specifically methylates the N7 position of a guanine in 16S rRNA.</text>
</comment>
<comment type="subcellular location">
    <subcellularLocation>
        <location evidence="1">Cytoplasm</location>
    </subcellularLocation>
</comment>
<comment type="similarity">
    <text evidence="1">Belongs to the methyltransferase superfamily. RNA methyltransferase RsmG family.</text>
</comment>
<reference key="1">
    <citation type="journal article" date="2002" name="Proc. Natl. Acad. Sci. U.S.A.">
        <title>The complete genome sequence of Chlorobium tepidum TLS, a photosynthetic, anaerobic, green-sulfur bacterium.</title>
        <authorList>
            <person name="Eisen J.A."/>
            <person name="Nelson K.E."/>
            <person name="Paulsen I.T."/>
            <person name="Heidelberg J.F."/>
            <person name="Wu M."/>
            <person name="Dodson R.J."/>
            <person name="DeBoy R.T."/>
            <person name="Gwinn M.L."/>
            <person name="Nelson W.C."/>
            <person name="Haft D.H."/>
            <person name="Hickey E.K."/>
            <person name="Peterson J.D."/>
            <person name="Durkin A.S."/>
            <person name="Kolonay J.F."/>
            <person name="Yang F."/>
            <person name="Holt I.E."/>
            <person name="Umayam L.A."/>
            <person name="Mason T.M."/>
            <person name="Brenner M."/>
            <person name="Shea T.P."/>
            <person name="Parksey D.S."/>
            <person name="Nierman W.C."/>
            <person name="Feldblyum T.V."/>
            <person name="Hansen C.L."/>
            <person name="Craven M.B."/>
            <person name="Radune D."/>
            <person name="Vamathevan J.J."/>
            <person name="Khouri H.M."/>
            <person name="White O."/>
            <person name="Gruber T.M."/>
            <person name="Ketchum K.A."/>
            <person name="Venter J.C."/>
            <person name="Tettelin H."/>
            <person name="Bryant D.A."/>
            <person name="Fraser C.M."/>
        </authorList>
    </citation>
    <scope>NUCLEOTIDE SEQUENCE [LARGE SCALE GENOMIC DNA]</scope>
    <source>
        <strain>ATCC 49652 / DSM 12025 / NBRC 103806 / TLS</strain>
    </source>
</reference>
<feature type="chain" id="PRO_0000184234" description="Ribosomal RNA small subunit methyltransferase G">
    <location>
        <begin position="1"/>
        <end position="217"/>
    </location>
</feature>
<feature type="binding site" evidence="1">
    <location>
        <position position="79"/>
    </location>
    <ligand>
        <name>S-adenosyl-L-methionine</name>
        <dbReference type="ChEBI" id="CHEBI:59789"/>
    </ligand>
</feature>
<feature type="binding site" evidence="1">
    <location>
        <position position="84"/>
    </location>
    <ligand>
        <name>S-adenosyl-L-methionine</name>
        <dbReference type="ChEBI" id="CHEBI:59789"/>
    </ligand>
</feature>
<feature type="binding site" evidence="1">
    <location>
        <begin position="102"/>
        <end position="104"/>
    </location>
    <ligand>
        <name>S-adenosyl-L-methionine</name>
        <dbReference type="ChEBI" id="CHEBI:59789"/>
    </ligand>
</feature>
<feature type="binding site" evidence="1">
    <location>
        <begin position="130"/>
        <end position="131"/>
    </location>
    <ligand>
        <name>S-adenosyl-L-methionine</name>
        <dbReference type="ChEBI" id="CHEBI:59789"/>
    </ligand>
</feature>
<feature type="binding site" evidence="1">
    <location>
        <position position="144"/>
    </location>
    <ligand>
        <name>S-adenosyl-L-methionine</name>
        <dbReference type="ChEBI" id="CHEBI:59789"/>
    </ligand>
</feature>
<accession>Q8KAK0</accession>